<gene>
    <name evidence="1" type="primary">rhaD</name>
    <name type="ordered locus">ECED1_4603</name>
</gene>
<protein>
    <recommendedName>
        <fullName evidence="1">Rhamnulose-1-phosphate aldolase</fullName>
        <ecNumber evidence="1">4.1.2.19</ecNumber>
    </recommendedName>
</protein>
<keyword id="KW-0963">Cytoplasm</keyword>
<keyword id="KW-0456">Lyase</keyword>
<keyword id="KW-0479">Metal-binding</keyword>
<keyword id="KW-0684">Rhamnose metabolism</keyword>
<keyword id="KW-0862">Zinc</keyword>
<comment type="function">
    <text evidence="1">Catalyzes the reversible cleavage of L-rhamnulose-1-phosphate to dihydroxyacetone phosphate (DHAP) and L-lactaldehyde.</text>
</comment>
<comment type="catalytic activity">
    <reaction evidence="1">
        <text>L-rhamnulose 1-phosphate = (S)-lactaldehyde + dihydroxyacetone phosphate</text>
        <dbReference type="Rhea" id="RHEA:19689"/>
        <dbReference type="ChEBI" id="CHEBI:18041"/>
        <dbReference type="ChEBI" id="CHEBI:57642"/>
        <dbReference type="ChEBI" id="CHEBI:58313"/>
        <dbReference type="EC" id="4.1.2.19"/>
    </reaction>
</comment>
<comment type="cofactor">
    <cofactor evidence="1">
        <name>Zn(2+)</name>
        <dbReference type="ChEBI" id="CHEBI:29105"/>
    </cofactor>
    <text evidence="1">Binds 1 zinc ion per subunit.</text>
</comment>
<comment type="pathway">
    <text evidence="1">Carbohydrate degradation; L-rhamnose degradation; glycerone phosphate from L-rhamnose: step 3/3.</text>
</comment>
<comment type="subunit">
    <text evidence="1">Homotetramer.</text>
</comment>
<comment type="subcellular location">
    <subcellularLocation>
        <location evidence="1">Cytoplasm</location>
    </subcellularLocation>
</comment>
<comment type="similarity">
    <text evidence="1">Belongs to the aldolase class II family. RhaD subfamily.</text>
</comment>
<name>RHAD_ECO81</name>
<reference key="1">
    <citation type="journal article" date="2009" name="PLoS Genet.">
        <title>Organised genome dynamics in the Escherichia coli species results in highly diverse adaptive paths.</title>
        <authorList>
            <person name="Touchon M."/>
            <person name="Hoede C."/>
            <person name="Tenaillon O."/>
            <person name="Barbe V."/>
            <person name="Baeriswyl S."/>
            <person name="Bidet P."/>
            <person name="Bingen E."/>
            <person name="Bonacorsi S."/>
            <person name="Bouchier C."/>
            <person name="Bouvet O."/>
            <person name="Calteau A."/>
            <person name="Chiapello H."/>
            <person name="Clermont O."/>
            <person name="Cruveiller S."/>
            <person name="Danchin A."/>
            <person name="Diard M."/>
            <person name="Dossat C."/>
            <person name="Karoui M.E."/>
            <person name="Frapy E."/>
            <person name="Garry L."/>
            <person name="Ghigo J.M."/>
            <person name="Gilles A.M."/>
            <person name="Johnson J."/>
            <person name="Le Bouguenec C."/>
            <person name="Lescat M."/>
            <person name="Mangenot S."/>
            <person name="Martinez-Jehanne V."/>
            <person name="Matic I."/>
            <person name="Nassif X."/>
            <person name="Oztas S."/>
            <person name="Petit M.A."/>
            <person name="Pichon C."/>
            <person name="Rouy Z."/>
            <person name="Ruf C.S."/>
            <person name="Schneider D."/>
            <person name="Tourret J."/>
            <person name="Vacherie B."/>
            <person name="Vallenet D."/>
            <person name="Medigue C."/>
            <person name="Rocha E.P.C."/>
            <person name="Denamur E."/>
        </authorList>
    </citation>
    <scope>NUCLEOTIDE SEQUENCE [LARGE SCALE GENOMIC DNA]</scope>
    <source>
        <strain>ED1a</strain>
    </source>
</reference>
<evidence type="ECO:0000255" key="1">
    <source>
        <dbReference type="HAMAP-Rule" id="MF_00770"/>
    </source>
</evidence>
<dbReference type="EC" id="4.1.2.19" evidence="1"/>
<dbReference type="EMBL" id="CU928162">
    <property type="protein sequence ID" value="CAR10712.2"/>
    <property type="molecule type" value="Genomic_DNA"/>
</dbReference>
<dbReference type="RefSeq" id="WP_001179748.1">
    <property type="nucleotide sequence ID" value="NC_011745.1"/>
</dbReference>
<dbReference type="SMR" id="B7N2P3"/>
<dbReference type="KEGG" id="ecq:ECED1_4603"/>
<dbReference type="HOGENOM" id="CLU_076831_0_0_6"/>
<dbReference type="UniPathway" id="UPA00541">
    <property type="reaction ID" value="UER00603"/>
</dbReference>
<dbReference type="Proteomes" id="UP000000748">
    <property type="component" value="Chromosome"/>
</dbReference>
<dbReference type="GO" id="GO:0005829">
    <property type="term" value="C:cytosol"/>
    <property type="evidence" value="ECO:0007669"/>
    <property type="project" value="TreeGrafter"/>
</dbReference>
<dbReference type="GO" id="GO:0046872">
    <property type="term" value="F:metal ion binding"/>
    <property type="evidence" value="ECO:0007669"/>
    <property type="project" value="UniProtKB-KW"/>
</dbReference>
<dbReference type="GO" id="GO:0008994">
    <property type="term" value="F:rhamnulose-1-phosphate aldolase activity"/>
    <property type="evidence" value="ECO:0007669"/>
    <property type="project" value="UniProtKB-UniRule"/>
</dbReference>
<dbReference type="GO" id="GO:0019323">
    <property type="term" value="P:pentose catabolic process"/>
    <property type="evidence" value="ECO:0007669"/>
    <property type="project" value="TreeGrafter"/>
</dbReference>
<dbReference type="GO" id="GO:0019301">
    <property type="term" value="P:rhamnose catabolic process"/>
    <property type="evidence" value="ECO:0007669"/>
    <property type="project" value="UniProtKB-UniRule"/>
</dbReference>
<dbReference type="CDD" id="cd00398">
    <property type="entry name" value="Aldolase_II"/>
    <property type="match status" value="1"/>
</dbReference>
<dbReference type="FunFam" id="3.40.225.10:FF:000006">
    <property type="entry name" value="Rhamnulose-1-phosphate aldolase"/>
    <property type="match status" value="1"/>
</dbReference>
<dbReference type="Gene3D" id="3.40.225.10">
    <property type="entry name" value="Class II aldolase/adducin N-terminal domain"/>
    <property type="match status" value="1"/>
</dbReference>
<dbReference type="HAMAP" id="MF_00770">
    <property type="entry name" value="RhaD"/>
    <property type="match status" value="1"/>
</dbReference>
<dbReference type="InterPro" id="IPR050197">
    <property type="entry name" value="Aldolase_class_II_sugar_metab"/>
</dbReference>
<dbReference type="InterPro" id="IPR001303">
    <property type="entry name" value="Aldolase_II/adducin_N"/>
</dbReference>
<dbReference type="InterPro" id="IPR036409">
    <property type="entry name" value="Aldolase_II/adducin_N_sf"/>
</dbReference>
<dbReference type="InterPro" id="IPR013447">
    <property type="entry name" value="Rhamnulose-1-P_Aldolase"/>
</dbReference>
<dbReference type="NCBIfam" id="NF002963">
    <property type="entry name" value="PRK03634.1"/>
    <property type="match status" value="1"/>
</dbReference>
<dbReference type="NCBIfam" id="TIGR02624">
    <property type="entry name" value="rhamnu_1P_ald"/>
    <property type="match status" value="1"/>
</dbReference>
<dbReference type="PANTHER" id="PTHR22789">
    <property type="entry name" value="FUCULOSE PHOSPHATE ALDOLASE"/>
    <property type="match status" value="1"/>
</dbReference>
<dbReference type="PANTHER" id="PTHR22789:SF16">
    <property type="entry name" value="RHAMNULOSE-1-PHOSPHATE ALDOLASE"/>
    <property type="match status" value="1"/>
</dbReference>
<dbReference type="Pfam" id="PF00596">
    <property type="entry name" value="Aldolase_II"/>
    <property type="match status" value="1"/>
</dbReference>
<dbReference type="SMART" id="SM01007">
    <property type="entry name" value="Aldolase_II"/>
    <property type="match status" value="1"/>
</dbReference>
<dbReference type="SUPFAM" id="SSF53639">
    <property type="entry name" value="AraD/HMP-PK domain-like"/>
    <property type="match status" value="1"/>
</dbReference>
<proteinExistence type="inferred from homology"/>
<sequence>MQNITQSWFVQGMIKATTDAWLKGWDERNGGNLTLRLDDADIAPYHDNFHQQPRYIPLSQPMPLLANTPFIVTGSGKFFRNVQLDPAANLGIVKVDSDGAGYHILWGLTNEAVPTSELPAHFLSHFERIKATNGKDRVIMHCHATNLIALTYVLENDTAVFTRQLWEGSTECLVVFPDGVGILPWMVPGTDEIGQATAQEMQKHSLVLWPFHGVFGSGPTLDETFGLIDTAEKSAQILVKVYSMSGMKQTISREELIALGQRFGVTPLASALAL</sequence>
<feature type="chain" id="PRO_1000148450" description="Rhamnulose-1-phosphate aldolase">
    <location>
        <begin position="1"/>
        <end position="274"/>
    </location>
</feature>
<feature type="active site" evidence="1">
    <location>
        <position position="117"/>
    </location>
</feature>
<feature type="binding site" evidence="1">
    <location>
        <position position="141"/>
    </location>
    <ligand>
        <name>Zn(2+)</name>
        <dbReference type="ChEBI" id="CHEBI:29105"/>
    </ligand>
</feature>
<feature type="binding site" evidence="1">
    <location>
        <position position="143"/>
    </location>
    <ligand>
        <name>Zn(2+)</name>
        <dbReference type="ChEBI" id="CHEBI:29105"/>
    </ligand>
</feature>
<feature type="binding site" evidence="1">
    <location>
        <position position="212"/>
    </location>
    <ligand>
        <name>Zn(2+)</name>
        <dbReference type="ChEBI" id="CHEBI:29105"/>
    </ligand>
</feature>
<organism>
    <name type="scientific">Escherichia coli O81 (strain ED1a)</name>
    <dbReference type="NCBI Taxonomy" id="585397"/>
    <lineage>
        <taxon>Bacteria</taxon>
        <taxon>Pseudomonadati</taxon>
        <taxon>Pseudomonadota</taxon>
        <taxon>Gammaproteobacteria</taxon>
        <taxon>Enterobacterales</taxon>
        <taxon>Enterobacteriaceae</taxon>
        <taxon>Escherichia</taxon>
    </lineage>
</organism>
<accession>B7N2P3</accession>